<protein>
    <recommendedName>
        <fullName>Serine/threonine-protein phosphatase 4 catalytic subunit 2</fullName>
        <shortName>PP4C-2</shortName>
        <ecNumber evidence="2">3.1.3.16</ecNumber>
    </recommendedName>
</protein>
<dbReference type="EC" id="3.1.3.16" evidence="2"/>
<dbReference type="EMBL" id="AB070574">
    <property type="protein sequence ID" value="BAB63948.1"/>
    <property type="molecule type" value="mRNA"/>
</dbReference>
<dbReference type="EMBL" id="Z98866">
    <property type="protein sequence ID" value="CAB11559.1"/>
    <property type="molecule type" value="Genomic_DNA"/>
</dbReference>
<dbReference type="PIR" id="T27049">
    <property type="entry name" value="T27049"/>
</dbReference>
<dbReference type="RefSeq" id="NP_001022898.1">
    <property type="nucleotide sequence ID" value="NM_001027727.6"/>
</dbReference>
<dbReference type="SMR" id="Q9XTT8"/>
<dbReference type="FunCoup" id="Q9XTT8">
    <property type="interactions" value="545"/>
</dbReference>
<dbReference type="STRING" id="6239.Y49E10.3a.1"/>
<dbReference type="PaxDb" id="6239-Y49E10.3a"/>
<dbReference type="PeptideAtlas" id="Q9XTT8"/>
<dbReference type="EnsemblMetazoa" id="Y49E10.3.1">
    <property type="protein sequence ID" value="Y49E10.3.1"/>
    <property type="gene ID" value="WBGene00004086"/>
</dbReference>
<dbReference type="GeneID" id="176663"/>
<dbReference type="KEGG" id="cel:CELE_Y49E10.3"/>
<dbReference type="UCSC" id="Y49E10.3b">
    <property type="organism name" value="c. elegans"/>
</dbReference>
<dbReference type="AGR" id="WB:WBGene00004086"/>
<dbReference type="CTD" id="176663"/>
<dbReference type="WormBase" id="Y49E10.3">
    <property type="protein sequence ID" value="CE22221"/>
    <property type="gene ID" value="WBGene00004086"/>
    <property type="gene designation" value="pph-4.2"/>
</dbReference>
<dbReference type="eggNOG" id="KOG0372">
    <property type="taxonomic scope" value="Eukaryota"/>
</dbReference>
<dbReference type="GeneTree" id="ENSGT00930000151040"/>
<dbReference type="HOGENOM" id="CLU_004962_8_1_1"/>
<dbReference type="InParanoid" id="Q9XTT8"/>
<dbReference type="OMA" id="KWWFNKS"/>
<dbReference type="OrthoDB" id="1930084at2759"/>
<dbReference type="PhylomeDB" id="Q9XTT8"/>
<dbReference type="PRO" id="PR:Q9XTT8"/>
<dbReference type="Proteomes" id="UP000001940">
    <property type="component" value="Chromosome III"/>
</dbReference>
<dbReference type="Bgee" id="WBGene00004086">
    <property type="expression patterns" value="Expressed in adult organism and 4 other cell types or tissues"/>
</dbReference>
<dbReference type="ExpressionAtlas" id="Q9XTT8">
    <property type="expression patterns" value="baseline and differential"/>
</dbReference>
<dbReference type="GO" id="GO:0005737">
    <property type="term" value="C:cytoplasm"/>
    <property type="evidence" value="ECO:0000318"/>
    <property type="project" value="GO_Central"/>
</dbReference>
<dbReference type="GO" id="GO:0005634">
    <property type="term" value="C:nucleus"/>
    <property type="evidence" value="ECO:0000318"/>
    <property type="project" value="GO_Central"/>
</dbReference>
<dbReference type="GO" id="GO:0046872">
    <property type="term" value="F:metal ion binding"/>
    <property type="evidence" value="ECO:0007669"/>
    <property type="project" value="UniProtKB-KW"/>
</dbReference>
<dbReference type="GO" id="GO:0004722">
    <property type="term" value="F:protein serine/threonine phosphatase activity"/>
    <property type="evidence" value="ECO:0000318"/>
    <property type="project" value="GO_Central"/>
</dbReference>
<dbReference type="GO" id="GO:0000724">
    <property type="term" value="P:double-strand break repair via homologous recombination"/>
    <property type="evidence" value="ECO:0000318"/>
    <property type="project" value="GO_Central"/>
</dbReference>
<dbReference type="CDD" id="cd07415">
    <property type="entry name" value="MPP_PP2A_PP4_PP6"/>
    <property type="match status" value="1"/>
</dbReference>
<dbReference type="FunFam" id="3.60.21.10:FF:000005">
    <property type="entry name" value="Serine/threonine-protein phosphatase"/>
    <property type="match status" value="1"/>
</dbReference>
<dbReference type="Gene3D" id="3.60.21.10">
    <property type="match status" value="1"/>
</dbReference>
<dbReference type="InterPro" id="IPR004843">
    <property type="entry name" value="Calcineurin-like_PHP_ApaH"/>
</dbReference>
<dbReference type="InterPro" id="IPR029052">
    <property type="entry name" value="Metallo-depent_PP-like"/>
</dbReference>
<dbReference type="InterPro" id="IPR047129">
    <property type="entry name" value="PPA2-like"/>
</dbReference>
<dbReference type="InterPro" id="IPR006186">
    <property type="entry name" value="Ser/Thr-sp_prot-phosphatase"/>
</dbReference>
<dbReference type="PANTHER" id="PTHR45619">
    <property type="entry name" value="SERINE/THREONINE-PROTEIN PHOSPHATASE PP2A-RELATED"/>
    <property type="match status" value="1"/>
</dbReference>
<dbReference type="Pfam" id="PF00149">
    <property type="entry name" value="Metallophos"/>
    <property type="match status" value="1"/>
</dbReference>
<dbReference type="PRINTS" id="PR00114">
    <property type="entry name" value="STPHPHTASE"/>
</dbReference>
<dbReference type="SMART" id="SM00156">
    <property type="entry name" value="PP2Ac"/>
    <property type="match status" value="1"/>
</dbReference>
<dbReference type="SUPFAM" id="SSF56300">
    <property type="entry name" value="Metallo-dependent phosphatases"/>
    <property type="match status" value="1"/>
</dbReference>
<dbReference type="PROSITE" id="PS00125">
    <property type="entry name" value="SER_THR_PHOSPHATASE"/>
    <property type="match status" value="1"/>
</dbReference>
<proteinExistence type="evidence at transcript level"/>
<accession>Q9XTT8</accession>
<accession>Q966Q3</accession>
<evidence type="ECO:0000250" key="1">
    <source>
        <dbReference type="UniProtKB" id="P36873"/>
    </source>
</evidence>
<evidence type="ECO:0000250" key="2">
    <source>
        <dbReference type="UniProtKB" id="P60510"/>
    </source>
</evidence>
<evidence type="ECO:0000250" key="3">
    <source>
        <dbReference type="UniProtKB" id="P67775"/>
    </source>
</evidence>
<evidence type="ECO:0000269" key="4">
    <source>
    </source>
</evidence>
<evidence type="ECO:0000303" key="5">
    <source>
    </source>
</evidence>
<evidence type="ECO:0000305" key="6"/>
<evidence type="ECO:0000312" key="7">
    <source>
        <dbReference type="WormBase" id="Y49E10.3"/>
    </source>
</evidence>
<keyword id="KW-0378">Hydrolase</keyword>
<keyword id="KW-0464">Manganese</keyword>
<keyword id="KW-0479">Metal-binding</keyword>
<keyword id="KW-0904">Protein phosphatase</keyword>
<keyword id="KW-1185">Reference proteome</keyword>
<reference key="1">
    <citation type="journal article" date="2002" name="J. Cell Sci.">
        <title>Protein phosphatase 4 is required for centrosome maturation in mitosis and sperm meiosis in C. elegans.</title>
        <authorList>
            <person name="Sumiyoshi E."/>
            <person name="Sugimoto A."/>
            <person name="Yamamoto M."/>
        </authorList>
    </citation>
    <scope>NUCLEOTIDE SEQUENCE [MRNA]</scope>
    <scope>FUNCTION</scope>
    <source>
        <strain>Bristol N2</strain>
    </source>
</reference>
<reference key="2">
    <citation type="journal article" date="1998" name="Science">
        <title>Genome sequence of the nematode C. elegans: a platform for investigating biology.</title>
        <authorList>
            <consortium name="The C. elegans sequencing consortium"/>
        </authorList>
    </citation>
    <scope>NUCLEOTIDE SEQUENCE [LARGE SCALE GENOMIC DNA]</scope>
    <source>
        <strain>Bristol N2</strain>
    </source>
</reference>
<sequence>MLEEDAAGPDQLGPNDLDRQIEIAMRCELICETQVKSICAKVREILIEEANVQVIDTPVTICGDIHGQFHDLMELFRVGGSPPNTNYLFLGDYVDRGYNSVETFILLMLLKCRYPDRITLIRGNHESRQITQVYGFYDECVRKYGSGQVWKHCTEIFDYLSLAAVIDGKLFCVHGGLSPSIATLDQIRVLDRKIEVPHEGPMCDLLWSDPEEGCSGWGISPRGAGYLFGGDAAELFCENNDFLRICRAHQLVMEGYKLHFRKRVVTVWSAPNYCYRCGNVAAIMEVTEENIDSDPVFEVFEAATVENRGEPKKQPIAQYFL</sequence>
<comment type="function">
    <text evidence="4">Protein phosphatase which seems to be involved in larval development but not essential for embryogenesis.</text>
</comment>
<comment type="catalytic activity">
    <reaction evidence="2">
        <text>O-phospho-L-seryl-[protein] + H2O = L-seryl-[protein] + phosphate</text>
        <dbReference type="Rhea" id="RHEA:20629"/>
        <dbReference type="Rhea" id="RHEA-COMP:9863"/>
        <dbReference type="Rhea" id="RHEA-COMP:11604"/>
        <dbReference type="ChEBI" id="CHEBI:15377"/>
        <dbReference type="ChEBI" id="CHEBI:29999"/>
        <dbReference type="ChEBI" id="CHEBI:43474"/>
        <dbReference type="ChEBI" id="CHEBI:83421"/>
        <dbReference type="EC" id="3.1.3.16"/>
    </reaction>
</comment>
<comment type="catalytic activity">
    <reaction evidence="2">
        <text>O-phospho-L-threonyl-[protein] + H2O = L-threonyl-[protein] + phosphate</text>
        <dbReference type="Rhea" id="RHEA:47004"/>
        <dbReference type="Rhea" id="RHEA-COMP:11060"/>
        <dbReference type="Rhea" id="RHEA-COMP:11605"/>
        <dbReference type="ChEBI" id="CHEBI:15377"/>
        <dbReference type="ChEBI" id="CHEBI:30013"/>
        <dbReference type="ChEBI" id="CHEBI:43474"/>
        <dbReference type="ChEBI" id="CHEBI:61977"/>
        <dbReference type="EC" id="3.1.3.16"/>
    </reaction>
</comment>
<comment type="cofactor">
    <cofactor evidence="2">
        <name>Mn(2+)</name>
        <dbReference type="ChEBI" id="CHEBI:29035"/>
    </cofactor>
    <text evidence="2">Binds 2 manganese ions per subunit.</text>
</comment>
<comment type="subunit">
    <text evidence="2">Serine/threonine-protein phosphatase 4 (PP4) occurs in different assemblies of the catalytic and one or more regulatory subunits.</text>
</comment>
<comment type="similarity">
    <text evidence="6">Belongs to the PPP phosphatase family. PP-4 (PP-X) subfamily.</text>
</comment>
<name>PP4C2_CAEEL</name>
<gene>
    <name evidence="5 7" type="primary">pph-4.2</name>
    <name evidence="7" type="ORF">Y49E10.3</name>
</gene>
<feature type="chain" id="PRO_0000353211" description="Serine/threonine-protein phosphatase 4 catalytic subunit 2">
    <location>
        <begin position="1"/>
        <end position="321"/>
    </location>
</feature>
<feature type="active site" description="Proton donor" evidence="1">
    <location>
        <position position="125"/>
    </location>
</feature>
<feature type="binding site" evidence="3">
    <location>
        <position position="64"/>
    </location>
    <ligand>
        <name>Mn(2+)</name>
        <dbReference type="ChEBI" id="CHEBI:29035"/>
        <label>1</label>
    </ligand>
</feature>
<feature type="binding site" evidence="3">
    <location>
        <position position="66"/>
    </location>
    <ligand>
        <name>Mn(2+)</name>
        <dbReference type="ChEBI" id="CHEBI:29035"/>
        <label>1</label>
    </ligand>
</feature>
<feature type="binding site" evidence="3">
    <location>
        <position position="92"/>
    </location>
    <ligand>
        <name>Mn(2+)</name>
        <dbReference type="ChEBI" id="CHEBI:29035"/>
        <label>1</label>
    </ligand>
</feature>
<feature type="binding site" evidence="3">
    <location>
        <position position="92"/>
    </location>
    <ligand>
        <name>Mn(2+)</name>
        <dbReference type="ChEBI" id="CHEBI:29035"/>
        <label>2</label>
    </ligand>
</feature>
<feature type="binding site" evidence="3">
    <location>
        <position position="124"/>
    </location>
    <ligand>
        <name>Mn(2+)</name>
        <dbReference type="ChEBI" id="CHEBI:29035"/>
        <label>2</label>
    </ligand>
</feature>
<feature type="binding site" evidence="3">
    <location>
        <position position="174"/>
    </location>
    <ligand>
        <name>Mn(2+)</name>
        <dbReference type="ChEBI" id="CHEBI:29035"/>
        <label>2</label>
    </ligand>
</feature>
<feature type="binding site" evidence="3">
    <location>
        <position position="249"/>
    </location>
    <ligand>
        <name>Mn(2+)</name>
        <dbReference type="ChEBI" id="CHEBI:29035"/>
        <label>2</label>
    </ligand>
</feature>
<feature type="sequence conflict" description="In Ref. 1; BAB63948." evidence="6" ref="1">
    <original>A</original>
    <variation>G</variation>
    <location>
        <position position="303"/>
    </location>
</feature>
<organism>
    <name type="scientific">Caenorhabditis elegans</name>
    <dbReference type="NCBI Taxonomy" id="6239"/>
    <lineage>
        <taxon>Eukaryota</taxon>
        <taxon>Metazoa</taxon>
        <taxon>Ecdysozoa</taxon>
        <taxon>Nematoda</taxon>
        <taxon>Chromadorea</taxon>
        <taxon>Rhabditida</taxon>
        <taxon>Rhabditina</taxon>
        <taxon>Rhabditomorpha</taxon>
        <taxon>Rhabditoidea</taxon>
        <taxon>Rhabditidae</taxon>
        <taxon>Peloderinae</taxon>
        <taxon>Caenorhabditis</taxon>
    </lineage>
</organism>